<accession>Q9CCS0</accession>
<keyword id="KW-0963">Cytoplasm</keyword>
<keyword id="KW-0251">Elongation factor</keyword>
<keyword id="KW-0648">Protein biosynthesis</keyword>
<keyword id="KW-1185">Reference proteome</keyword>
<gene>
    <name evidence="1" type="primary">efp</name>
    <name type="ordered locus">ML0522</name>
</gene>
<organism>
    <name type="scientific">Mycobacterium leprae (strain TN)</name>
    <dbReference type="NCBI Taxonomy" id="272631"/>
    <lineage>
        <taxon>Bacteria</taxon>
        <taxon>Bacillati</taxon>
        <taxon>Actinomycetota</taxon>
        <taxon>Actinomycetes</taxon>
        <taxon>Mycobacteriales</taxon>
        <taxon>Mycobacteriaceae</taxon>
        <taxon>Mycobacterium</taxon>
    </lineage>
</organism>
<evidence type="ECO:0000255" key="1">
    <source>
        <dbReference type="HAMAP-Rule" id="MF_00141"/>
    </source>
</evidence>
<comment type="function">
    <text evidence="1">Involved in peptide bond synthesis. Stimulates efficient translation and peptide-bond synthesis on native or reconstituted 70S ribosomes in vitro. Probably functions indirectly by altering the affinity of the ribosome for aminoacyl-tRNA, thus increasing their reactivity as acceptors for peptidyl transferase.</text>
</comment>
<comment type="pathway">
    <text evidence="1">Protein biosynthesis; polypeptide chain elongation.</text>
</comment>
<comment type="subcellular location">
    <subcellularLocation>
        <location evidence="1">Cytoplasm</location>
    </subcellularLocation>
</comment>
<comment type="similarity">
    <text evidence="1">Belongs to the elongation factor P family.</text>
</comment>
<reference key="1">
    <citation type="journal article" date="2001" name="Nature">
        <title>Massive gene decay in the leprosy bacillus.</title>
        <authorList>
            <person name="Cole S.T."/>
            <person name="Eiglmeier K."/>
            <person name="Parkhill J."/>
            <person name="James K.D."/>
            <person name="Thomson N.R."/>
            <person name="Wheeler P.R."/>
            <person name="Honore N."/>
            <person name="Garnier T."/>
            <person name="Churcher C.M."/>
            <person name="Harris D.E."/>
            <person name="Mungall K.L."/>
            <person name="Basham D."/>
            <person name="Brown D."/>
            <person name="Chillingworth T."/>
            <person name="Connor R."/>
            <person name="Davies R.M."/>
            <person name="Devlin K."/>
            <person name="Duthoy S."/>
            <person name="Feltwell T."/>
            <person name="Fraser A."/>
            <person name="Hamlin N."/>
            <person name="Holroyd S."/>
            <person name="Hornsby T."/>
            <person name="Jagels K."/>
            <person name="Lacroix C."/>
            <person name="Maclean J."/>
            <person name="Moule S."/>
            <person name="Murphy L.D."/>
            <person name="Oliver K."/>
            <person name="Quail M.A."/>
            <person name="Rajandream M.A."/>
            <person name="Rutherford K.M."/>
            <person name="Rutter S."/>
            <person name="Seeger K."/>
            <person name="Simon S."/>
            <person name="Simmonds M."/>
            <person name="Skelton J."/>
            <person name="Squares R."/>
            <person name="Squares S."/>
            <person name="Stevens K."/>
            <person name="Taylor K."/>
            <person name="Whitehead S."/>
            <person name="Woodward J.R."/>
            <person name="Barrell B.G."/>
        </authorList>
    </citation>
    <scope>NUCLEOTIDE SEQUENCE [LARGE SCALE GENOMIC DNA]</scope>
    <source>
        <strain>TN</strain>
    </source>
</reference>
<feature type="chain" id="PRO_0000094285" description="Elongation factor P">
    <location>
        <begin position="1"/>
        <end position="187"/>
    </location>
</feature>
<name>EFP_MYCLE</name>
<protein>
    <recommendedName>
        <fullName evidence="1">Elongation factor P</fullName>
        <shortName evidence="1">EF-P</shortName>
    </recommendedName>
</protein>
<sequence length="187" mass="20397">MATTADFKNGLVLVIDGQLWTIIGFQHVKPGKGPAFVRTKLKNVLSGKVVDKTYNAGVKVDTATVDRRDTTYLYRDGANFVFMDSQDYEQHPLPESLVGDTARFLLEGMSVQVAFHNGVPLYVELPVTVELEVTHTEPGLQGDRSSAGTKPATLETGAQINVPLFINTGDKLKVDSRDGSYLGRVNV</sequence>
<proteinExistence type="inferred from homology"/>
<dbReference type="EMBL" id="AL583918">
    <property type="protein sequence ID" value="CAC30030.1"/>
    <property type="molecule type" value="Genomic_DNA"/>
</dbReference>
<dbReference type="PIR" id="B86974">
    <property type="entry name" value="B86974"/>
</dbReference>
<dbReference type="RefSeq" id="NP_301447.1">
    <property type="nucleotide sequence ID" value="NC_002677.1"/>
</dbReference>
<dbReference type="RefSeq" id="WP_010907771.1">
    <property type="nucleotide sequence ID" value="NC_002677.1"/>
</dbReference>
<dbReference type="SMR" id="Q9CCS0"/>
<dbReference type="STRING" id="272631.gene:17574343"/>
<dbReference type="KEGG" id="mle:ML0522"/>
<dbReference type="PATRIC" id="fig|272631.5.peg.911"/>
<dbReference type="Leproma" id="ML0522"/>
<dbReference type="eggNOG" id="COG0231">
    <property type="taxonomic scope" value="Bacteria"/>
</dbReference>
<dbReference type="HOGENOM" id="CLU_074944_0_1_11"/>
<dbReference type="OrthoDB" id="9801844at2"/>
<dbReference type="UniPathway" id="UPA00345"/>
<dbReference type="Proteomes" id="UP000000806">
    <property type="component" value="Chromosome"/>
</dbReference>
<dbReference type="GO" id="GO:0005737">
    <property type="term" value="C:cytoplasm"/>
    <property type="evidence" value="ECO:0007669"/>
    <property type="project" value="UniProtKB-SubCell"/>
</dbReference>
<dbReference type="GO" id="GO:0003746">
    <property type="term" value="F:translation elongation factor activity"/>
    <property type="evidence" value="ECO:0007669"/>
    <property type="project" value="UniProtKB-UniRule"/>
</dbReference>
<dbReference type="GO" id="GO:0043043">
    <property type="term" value="P:peptide biosynthetic process"/>
    <property type="evidence" value="ECO:0007669"/>
    <property type="project" value="InterPro"/>
</dbReference>
<dbReference type="CDD" id="cd04470">
    <property type="entry name" value="S1_EF-P_repeat_1"/>
    <property type="match status" value="1"/>
</dbReference>
<dbReference type="CDD" id="cd05794">
    <property type="entry name" value="S1_EF-P_repeat_2"/>
    <property type="match status" value="1"/>
</dbReference>
<dbReference type="FunFam" id="2.30.30.30:FF:000003">
    <property type="entry name" value="Elongation factor P"/>
    <property type="match status" value="1"/>
</dbReference>
<dbReference type="FunFam" id="2.40.50.140:FF:000004">
    <property type="entry name" value="Elongation factor P"/>
    <property type="match status" value="1"/>
</dbReference>
<dbReference type="FunFam" id="2.40.50.140:FF:000009">
    <property type="entry name" value="Elongation factor P"/>
    <property type="match status" value="1"/>
</dbReference>
<dbReference type="Gene3D" id="2.30.30.30">
    <property type="match status" value="1"/>
</dbReference>
<dbReference type="Gene3D" id="2.40.50.140">
    <property type="entry name" value="Nucleic acid-binding proteins"/>
    <property type="match status" value="2"/>
</dbReference>
<dbReference type="HAMAP" id="MF_00141">
    <property type="entry name" value="EF_P"/>
    <property type="match status" value="1"/>
</dbReference>
<dbReference type="InterPro" id="IPR015365">
    <property type="entry name" value="Elong-fact-P_C"/>
</dbReference>
<dbReference type="InterPro" id="IPR012340">
    <property type="entry name" value="NA-bd_OB-fold"/>
</dbReference>
<dbReference type="InterPro" id="IPR014722">
    <property type="entry name" value="Rib_uL2_dom2"/>
</dbReference>
<dbReference type="InterPro" id="IPR020599">
    <property type="entry name" value="Transl_elong_fac_P/YeiP"/>
</dbReference>
<dbReference type="InterPro" id="IPR013185">
    <property type="entry name" value="Transl_elong_KOW-like"/>
</dbReference>
<dbReference type="InterPro" id="IPR001059">
    <property type="entry name" value="Transl_elong_P/YeiP_cen"/>
</dbReference>
<dbReference type="InterPro" id="IPR013852">
    <property type="entry name" value="Transl_elong_P/YeiP_CS"/>
</dbReference>
<dbReference type="InterPro" id="IPR011768">
    <property type="entry name" value="Transl_elongation_fac_P"/>
</dbReference>
<dbReference type="InterPro" id="IPR008991">
    <property type="entry name" value="Translation_prot_SH3-like_sf"/>
</dbReference>
<dbReference type="NCBIfam" id="TIGR00038">
    <property type="entry name" value="efp"/>
    <property type="match status" value="1"/>
</dbReference>
<dbReference type="NCBIfam" id="NF001810">
    <property type="entry name" value="PRK00529.1"/>
    <property type="match status" value="1"/>
</dbReference>
<dbReference type="PANTHER" id="PTHR30053">
    <property type="entry name" value="ELONGATION FACTOR P"/>
    <property type="match status" value="1"/>
</dbReference>
<dbReference type="PANTHER" id="PTHR30053:SF12">
    <property type="entry name" value="ELONGATION FACTOR P (EF-P) FAMILY PROTEIN"/>
    <property type="match status" value="1"/>
</dbReference>
<dbReference type="Pfam" id="PF01132">
    <property type="entry name" value="EFP"/>
    <property type="match status" value="1"/>
</dbReference>
<dbReference type="Pfam" id="PF08207">
    <property type="entry name" value="EFP_N"/>
    <property type="match status" value="1"/>
</dbReference>
<dbReference type="Pfam" id="PF09285">
    <property type="entry name" value="Elong-fact-P_C"/>
    <property type="match status" value="1"/>
</dbReference>
<dbReference type="PIRSF" id="PIRSF005901">
    <property type="entry name" value="EF-P"/>
    <property type="match status" value="1"/>
</dbReference>
<dbReference type="SMART" id="SM01185">
    <property type="entry name" value="EFP"/>
    <property type="match status" value="1"/>
</dbReference>
<dbReference type="SMART" id="SM00841">
    <property type="entry name" value="Elong-fact-P_C"/>
    <property type="match status" value="1"/>
</dbReference>
<dbReference type="SUPFAM" id="SSF50249">
    <property type="entry name" value="Nucleic acid-binding proteins"/>
    <property type="match status" value="2"/>
</dbReference>
<dbReference type="SUPFAM" id="SSF50104">
    <property type="entry name" value="Translation proteins SH3-like domain"/>
    <property type="match status" value="1"/>
</dbReference>
<dbReference type="PROSITE" id="PS01275">
    <property type="entry name" value="EFP"/>
    <property type="match status" value="1"/>
</dbReference>